<name>RL16_RHIE6</name>
<organism>
    <name type="scientific">Rhizobium etli (strain CIAT 652)</name>
    <dbReference type="NCBI Taxonomy" id="491916"/>
    <lineage>
        <taxon>Bacteria</taxon>
        <taxon>Pseudomonadati</taxon>
        <taxon>Pseudomonadota</taxon>
        <taxon>Alphaproteobacteria</taxon>
        <taxon>Hyphomicrobiales</taxon>
        <taxon>Rhizobiaceae</taxon>
        <taxon>Rhizobium/Agrobacterium group</taxon>
        <taxon>Rhizobium</taxon>
    </lineage>
</organism>
<sequence>MLQPKRTKYRKQFKGRIKGVAKGGSDLAFGEFGLKAQEPNRVNAREIEAARRAITRYMKRAGRVWIRVFPDVPVTAKPTEVRMGKGKGSVEYWACKVKPGRMMFEIDGVSEEIAREALRLGSAKLSVKTRFVQRIAE</sequence>
<accession>B3PWS8</accession>
<proteinExistence type="inferred from homology"/>
<keyword id="KW-0687">Ribonucleoprotein</keyword>
<keyword id="KW-0689">Ribosomal protein</keyword>
<keyword id="KW-0694">RNA-binding</keyword>
<keyword id="KW-0699">rRNA-binding</keyword>
<keyword id="KW-0820">tRNA-binding</keyword>
<dbReference type="EMBL" id="CP001074">
    <property type="protein sequence ID" value="ACE90726.1"/>
    <property type="molecule type" value="Genomic_DNA"/>
</dbReference>
<dbReference type="SMR" id="B3PWS8"/>
<dbReference type="KEGG" id="rec:RHECIAT_CH0001756"/>
<dbReference type="eggNOG" id="COG0197">
    <property type="taxonomic scope" value="Bacteria"/>
</dbReference>
<dbReference type="HOGENOM" id="CLU_078858_2_1_5"/>
<dbReference type="Proteomes" id="UP000008817">
    <property type="component" value="Chromosome"/>
</dbReference>
<dbReference type="GO" id="GO:0022625">
    <property type="term" value="C:cytosolic large ribosomal subunit"/>
    <property type="evidence" value="ECO:0007669"/>
    <property type="project" value="TreeGrafter"/>
</dbReference>
<dbReference type="GO" id="GO:0019843">
    <property type="term" value="F:rRNA binding"/>
    <property type="evidence" value="ECO:0007669"/>
    <property type="project" value="UniProtKB-UniRule"/>
</dbReference>
<dbReference type="GO" id="GO:0003735">
    <property type="term" value="F:structural constituent of ribosome"/>
    <property type="evidence" value="ECO:0007669"/>
    <property type="project" value="InterPro"/>
</dbReference>
<dbReference type="GO" id="GO:0000049">
    <property type="term" value="F:tRNA binding"/>
    <property type="evidence" value="ECO:0007669"/>
    <property type="project" value="UniProtKB-KW"/>
</dbReference>
<dbReference type="GO" id="GO:0006412">
    <property type="term" value="P:translation"/>
    <property type="evidence" value="ECO:0007669"/>
    <property type="project" value="UniProtKB-UniRule"/>
</dbReference>
<dbReference type="CDD" id="cd01433">
    <property type="entry name" value="Ribosomal_L16_L10e"/>
    <property type="match status" value="1"/>
</dbReference>
<dbReference type="FunFam" id="3.90.1170.10:FF:000001">
    <property type="entry name" value="50S ribosomal protein L16"/>
    <property type="match status" value="1"/>
</dbReference>
<dbReference type="Gene3D" id="3.90.1170.10">
    <property type="entry name" value="Ribosomal protein L10e/L16"/>
    <property type="match status" value="1"/>
</dbReference>
<dbReference type="HAMAP" id="MF_01342">
    <property type="entry name" value="Ribosomal_uL16"/>
    <property type="match status" value="1"/>
</dbReference>
<dbReference type="InterPro" id="IPR047873">
    <property type="entry name" value="Ribosomal_uL16"/>
</dbReference>
<dbReference type="InterPro" id="IPR000114">
    <property type="entry name" value="Ribosomal_uL16_bact-type"/>
</dbReference>
<dbReference type="InterPro" id="IPR020798">
    <property type="entry name" value="Ribosomal_uL16_CS"/>
</dbReference>
<dbReference type="InterPro" id="IPR016180">
    <property type="entry name" value="Ribosomal_uL16_dom"/>
</dbReference>
<dbReference type="InterPro" id="IPR036920">
    <property type="entry name" value="Ribosomal_uL16_sf"/>
</dbReference>
<dbReference type="NCBIfam" id="TIGR01164">
    <property type="entry name" value="rplP_bact"/>
    <property type="match status" value="1"/>
</dbReference>
<dbReference type="PANTHER" id="PTHR12220">
    <property type="entry name" value="50S/60S RIBOSOMAL PROTEIN L16"/>
    <property type="match status" value="1"/>
</dbReference>
<dbReference type="PANTHER" id="PTHR12220:SF13">
    <property type="entry name" value="LARGE RIBOSOMAL SUBUNIT PROTEIN UL16M"/>
    <property type="match status" value="1"/>
</dbReference>
<dbReference type="Pfam" id="PF00252">
    <property type="entry name" value="Ribosomal_L16"/>
    <property type="match status" value="1"/>
</dbReference>
<dbReference type="PRINTS" id="PR00060">
    <property type="entry name" value="RIBOSOMALL16"/>
</dbReference>
<dbReference type="SUPFAM" id="SSF54686">
    <property type="entry name" value="Ribosomal protein L16p/L10e"/>
    <property type="match status" value="1"/>
</dbReference>
<dbReference type="PROSITE" id="PS00586">
    <property type="entry name" value="RIBOSOMAL_L16_1"/>
    <property type="match status" value="1"/>
</dbReference>
<dbReference type="PROSITE" id="PS00701">
    <property type="entry name" value="RIBOSOMAL_L16_2"/>
    <property type="match status" value="1"/>
</dbReference>
<protein>
    <recommendedName>
        <fullName evidence="1">Large ribosomal subunit protein uL16</fullName>
    </recommendedName>
    <alternativeName>
        <fullName evidence="2">50S ribosomal protein L16</fullName>
    </alternativeName>
</protein>
<comment type="function">
    <text evidence="1">Binds 23S rRNA and is also seen to make contacts with the A and possibly P site tRNAs.</text>
</comment>
<comment type="subunit">
    <text evidence="1">Part of the 50S ribosomal subunit.</text>
</comment>
<comment type="similarity">
    <text evidence="1">Belongs to the universal ribosomal protein uL16 family.</text>
</comment>
<gene>
    <name evidence="1" type="primary">rplP</name>
    <name type="ordered locus">RHECIAT_CH0001756</name>
</gene>
<evidence type="ECO:0000255" key="1">
    <source>
        <dbReference type="HAMAP-Rule" id="MF_01342"/>
    </source>
</evidence>
<evidence type="ECO:0000305" key="2"/>
<feature type="chain" id="PRO_1000143016" description="Large ribosomal subunit protein uL16">
    <location>
        <begin position="1"/>
        <end position="137"/>
    </location>
</feature>
<reference key="1">
    <citation type="journal article" date="2010" name="Appl. Environ. Microbiol.">
        <title>Conserved symbiotic plasmid DNA sequences in the multireplicon pangenomic structure of Rhizobium etli.</title>
        <authorList>
            <person name="Gonzalez V."/>
            <person name="Acosta J.L."/>
            <person name="Santamaria R.I."/>
            <person name="Bustos P."/>
            <person name="Fernandez J.L."/>
            <person name="Hernandez Gonzalez I.L."/>
            <person name="Diaz R."/>
            <person name="Flores M."/>
            <person name="Palacios R."/>
            <person name="Mora J."/>
            <person name="Davila G."/>
        </authorList>
    </citation>
    <scope>NUCLEOTIDE SEQUENCE [LARGE SCALE GENOMIC DNA]</scope>
    <source>
        <strain>CIAT 652</strain>
    </source>
</reference>